<organism>
    <name type="scientific">Arabidopsis thaliana</name>
    <name type="common">Mouse-ear cress</name>
    <dbReference type="NCBI Taxonomy" id="3702"/>
    <lineage>
        <taxon>Eukaryota</taxon>
        <taxon>Viridiplantae</taxon>
        <taxon>Streptophyta</taxon>
        <taxon>Embryophyta</taxon>
        <taxon>Tracheophyta</taxon>
        <taxon>Spermatophyta</taxon>
        <taxon>Magnoliopsida</taxon>
        <taxon>eudicotyledons</taxon>
        <taxon>Gunneridae</taxon>
        <taxon>Pentapetalae</taxon>
        <taxon>rosids</taxon>
        <taxon>malvids</taxon>
        <taxon>Brassicales</taxon>
        <taxon>Brassicaceae</taxon>
        <taxon>Camelineae</taxon>
        <taxon>Arabidopsis</taxon>
    </lineage>
</organism>
<evidence type="ECO:0000250" key="1"/>
<evidence type="ECO:0000255" key="2"/>
<evidence type="ECO:0000255" key="3">
    <source>
        <dbReference type="PROSITE-ProRule" id="PRU00175"/>
    </source>
</evidence>
<evidence type="ECO:0000305" key="4"/>
<reference key="1">
    <citation type="journal article" date="1999" name="Nature">
        <title>Sequence and analysis of chromosome 2 of the plant Arabidopsis thaliana.</title>
        <authorList>
            <person name="Lin X."/>
            <person name="Kaul S."/>
            <person name="Rounsley S.D."/>
            <person name="Shea T.P."/>
            <person name="Benito M.-I."/>
            <person name="Town C.D."/>
            <person name="Fujii C.Y."/>
            <person name="Mason T.M."/>
            <person name="Bowman C.L."/>
            <person name="Barnstead M.E."/>
            <person name="Feldblyum T.V."/>
            <person name="Buell C.R."/>
            <person name="Ketchum K.A."/>
            <person name="Lee J.J."/>
            <person name="Ronning C.M."/>
            <person name="Koo H.L."/>
            <person name="Moffat K.S."/>
            <person name="Cronin L.A."/>
            <person name="Shen M."/>
            <person name="Pai G."/>
            <person name="Van Aken S."/>
            <person name="Umayam L."/>
            <person name="Tallon L.J."/>
            <person name="Gill J.E."/>
            <person name="Adams M.D."/>
            <person name="Carrera A.J."/>
            <person name="Creasy T.H."/>
            <person name="Goodman H.M."/>
            <person name="Somerville C.R."/>
            <person name="Copenhaver G.P."/>
            <person name="Preuss D."/>
            <person name="Nierman W.C."/>
            <person name="White O."/>
            <person name="Eisen J.A."/>
            <person name="Salzberg S.L."/>
            <person name="Fraser C.M."/>
            <person name="Venter J.C."/>
        </authorList>
    </citation>
    <scope>NUCLEOTIDE SEQUENCE [LARGE SCALE GENOMIC DNA]</scope>
    <source>
        <strain>cv. Columbia</strain>
    </source>
</reference>
<reference key="2">
    <citation type="journal article" date="2017" name="Plant J.">
        <title>Araport11: a complete reannotation of the Arabidopsis thaliana reference genome.</title>
        <authorList>
            <person name="Cheng C.Y."/>
            <person name="Krishnakumar V."/>
            <person name="Chan A.P."/>
            <person name="Thibaud-Nissen F."/>
            <person name="Schobel S."/>
            <person name="Town C.D."/>
        </authorList>
    </citation>
    <scope>GENOME REANNOTATION</scope>
    <source>
        <strain>cv. Columbia</strain>
    </source>
</reference>
<reference key="3">
    <citation type="journal article" date="2002" name="Genome Biol.">
        <title>Evaluation and classification of RING-finger domains encoded by the Arabidopsis genome.</title>
        <authorList>
            <person name="Kosarev P."/>
            <person name="Mayer K.F.X."/>
            <person name="Hardtke C.S."/>
        </authorList>
    </citation>
    <scope>GENE FAMILY ORGANIZATION</scope>
</reference>
<reference key="4">
    <citation type="journal article" date="2006" name="J. Mol. Evol.">
        <title>The ATL gene family from Arabidopsis thaliana and Oryza sativa comprises a large number of putative ubiquitin ligases of the RING-H2 type.</title>
        <authorList>
            <person name="Serrano M."/>
            <person name="Parra S."/>
            <person name="Alcaraz L.D."/>
            <person name="Guzman P."/>
        </authorList>
    </citation>
    <scope>NOMENCLATURE</scope>
    <scope>GENE FAMILY ORGANIZATION</scope>
</reference>
<dbReference type="EC" id="2.3.2.27" evidence="4"/>
<dbReference type="EMBL" id="AC006418">
    <property type="status" value="NOT_ANNOTATED_CDS"/>
    <property type="molecule type" value="Genomic_DNA"/>
</dbReference>
<dbReference type="EMBL" id="AC006526">
    <property type="status" value="NOT_ANNOTATED_CDS"/>
    <property type="molecule type" value="Genomic_DNA"/>
</dbReference>
<dbReference type="EMBL" id="CP002685">
    <property type="protein sequence ID" value="AEC10705.1"/>
    <property type="status" value="ALT_SEQ"/>
    <property type="molecule type" value="Genomic_DNA"/>
</dbReference>
<dbReference type="RefSeq" id="NP_001189760.1">
    <property type="nucleotide sequence ID" value="NM_001202831.1"/>
</dbReference>
<dbReference type="SMR" id="P0CH03"/>
<dbReference type="GeneID" id="10723091"/>
<dbReference type="KEGG" id="ath:AT2G46493"/>
<dbReference type="Araport" id="AT2G46493"/>
<dbReference type="TAIR" id="AT2G46493">
    <property type="gene designation" value="ATL95"/>
</dbReference>
<dbReference type="InParanoid" id="P0CH03"/>
<dbReference type="OrthoDB" id="8062037at2759"/>
<dbReference type="UniPathway" id="UPA00143"/>
<dbReference type="PRO" id="PR:P0CH03"/>
<dbReference type="Proteomes" id="UP000006548">
    <property type="component" value="Chromosome 2"/>
</dbReference>
<dbReference type="ExpressionAtlas" id="P0CH03">
    <property type="expression patterns" value="baseline"/>
</dbReference>
<dbReference type="GO" id="GO:0016020">
    <property type="term" value="C:membrane"/>
    <property type="evidence" value="ECO:0007669"/>
    <property type="project" value="UniProtKB-SubCell"/>
</dbReference>
<dbReference type="GO" id="GO:0030247">
    <property type="term" value="F:polysaccharide binding"/>
    <property type="evidence" value="ECO:0007669"/>
    <property type="project" value="InterPro"/>
</dbReference>
<dbReference type="GO" id="GO:0016740">
    <property type="term" value="F:transferase activity"/>
    <property type="evidence" value="ECO:0007669"/>
    <property type="project" value="UniProtKB-KW"/>
</dbReference>
<dbReference type="GO" id="GO:0008270">
    <property type="term" value="F:zinc ion binding"/>
    <property type="evidence" value="ECO:0007669"/>
    <property type="project" value="UniProtKB-KW"/>
</dbReference>
<dbReference type="GO" id="GO:0016567">
    <property type="term" value="P:protein ubiquitination"/>
    <property type="evidence" value="ECO:0007669"/>
    <property type="project" value="UniProtKB-UniPathway"/>
</dbReference>
<dbReference type="CDD" id="cd16461">
    <property type="entry name" value="RING-H2_EL5-like"/>
    <property type="match status" value="1"/>
</dbReference>
<dbReference type="Gene3D" id="3.30.40.10">
    <property type="entry name" value="Zinc/RING finger domain, C3HC4 (zinc finger)"/>
    <property type="match status" value="1"/>
</dbReference>
<dbReference type="InterPro" id="IPR046948">
    <property type="entry name" value="ATL20-22-like"/>
</dbReference>
<dbReference type="InterPro" id="IPR025287">
    <property type="entry name" value="WAK_GUB"/>
</dbReference>
<dbReference type="InterPro" id="IPR001841">
    <property type="entry name" value="Znf_RING"/>
</dbReference>
<dbReference type="InterPro" id="IPR013083">
    <property type="entry name" value="Znf_RING/FYVE/PHD"/>
</dbReference>
<dbReference type="PANTHER" id="PTHR46279:SF14">
    <property type="entry name" value="RING-H2 FINGER PROTEIN ATL20-RELATED"/>
    <property type="match status" value="1"/>
</dbReference>
<dbReference type="PANTHER" id="PTHR46279">
    <property type="entry name" value="RING/U-BOX SUPERFAMILY PROTEIN"/>
    <property type="match status" value="1"/>
</dbReference>
<dbReference type="Pfam" id="PF13947">
    <property type="entry name" value="GUB_WAK_bind"/>
    <property type="match status" value="1"/>
</dbReference>
<dbReference type="Pfam" id="PF13639">
    <property type="entry name" value="zf-RING_2"/>
    <property type="match status" value="1"/>
</dbReference>
<dbReference type="SMART" id="SM00184">
    <property type="entry name" value="RING"/>
    <property type="match status" value="1"/>
</dbReference>
<dbReference type="SUPFAM" id="SSF57850">
    <property type="entry name" value="RING/U-box"/>
    <property type="match status" value="1"/>
</dbReference>
<dbReference type="PROSITE" id="PS50089">
    <property type="entry name" value="ZF_RING_2"/>
    <property type="match status" value="1"/>
</dbReference>
<proteinExistence type="inferred from homology"/>
<keyword id="KW-0472">Membrane</keyword>
<keyword id="KW-0479">Metal-binding</keyword>
<keyword id="KW-1185">Reference proteome</keyword>
<keyword id="KW-0732">Signal</keyword>
<keyword id="KW-0808">Transferase</keyword>
<keyword id="KW-0812">Transmembrane</keyword>
<keyword id="KW-1133">Transmembrane helix</keyword>
<keyword id="KW-0833">Ubl conjugation pathway</keyword>
<keyword id="KW-0862">Zinc</keyword>
<keyword id="KW-0863">Zinc-finger</keyword>
<name>AT21C_ARATH</name>
<feature type="signal peptide" evidence="2">
    <location>
        <begin position="1"/>
        <end position="23"/>
    </location>
</feature>
<feature type="chain" id="PRO_0000396122" description="Putative RING-H2 finger protein ATL21C">
    <location>
        <begin position="24"/>
        <end position="366"/>
    </location>
</feature>
<feature type="transmembrane region" description="Helical" evidence="2">
    <location>
        <begin position="243"/>
        <end position="263"/>
    </location>
</feature>
<feature type="zinc finger region" description="RING-type; atypical" evidence="3">
    <location>
        <begin position="320"/>
        <end position="362"/>
    </location>
</feature>
<sequence length="366" mass="41121">MTFSKQLFPFVFFLLFLVSLRHASNPNNCSSSSSRPLRCGPLEVPIRFPFCNHARFNLHCTDLNKTVLELPMSGTFLVRDIDYRRQKIYINDPNCLAKRLLTFNISGSPFSPHFDILYTFLSCPNEVVLPSWYPSIPCLSNSTSSFFATSNYSLAQSMLPSCQIVKRLHVPATSPFGETRFSSDLNNQSLLLEWALPDCRAKCLGATKKTGTIYNSNIFSCSFSFLYDSRELFINGNLSSGVLVLVISLSAVTVFVFPTCIAIRLYDSERFDSAIAAATVMQQPREVMARRGLDQSTIETFKKMELGESRRLSGTNGIVCPICLSEYASKETVRFIPECDHCFHVECIDVWLKIHGSCPLCRNSCA</sequence>
<protein>
    <recommendedName>
        <fullName>Putative RING-H2 finger protein ATL21C</fullName>
        <ecNumber evidence="4">2.3.2.27</ecNumber>
    </recommendedName>
    <alternativeName>
        <fullName evidence="4">RING-type E3 ubiquitin transferase ATL21C</fullName>
    </alternativeName>
</protein>
<comment type="catalytic activity">
    <reaction evidence="4">
        <text>S-ubiquitinyl-[E2 ubiquitin-conjugating enzyme]-L-cysteine + [acceptor protein]-L-lysine = [E2 ubiquitin-conjugating enzyme]-L-cysteine + N(6)-ubiquitinyl-[acceptor protein]-L-lysine.</text>
        <dbReference type="EC" id="2.3.2.27"/>
    </reaction>
</comment>
<comment type="pathway">
    <text>Protein modification; protein ubiquitination.</text>
</comment>
<comment type="subcellular location">
    <subcellularLocation>
        <location evidence="4">Membrane</location>
        <topology evidence="4">Single-pass membrane protein</topology>
    </subcellularLocation>
</comment>
<comment type="domain">
    <text evidence="1">The RING-type zinc finger domain mediates binding to an E2 ubiquitin-conjugating enzyme.</text>
</comment>
<comment type="similarity">
    <text evidence="4">Belongs to the RING-type zinc finger family. ATL subfamily.</text>
</comment>
<comment type="sequence caution" evidence="4">
    <conflict type="erroneous gene model prediction">
        <sequence resource="EMBL-CDS" id="AEC10705"/>
    </conflict>
</comment>
<accession>P0CH03</accession>
<accession>F4IJ52</accession>
<accession>Q3EBF2</accession>
<gene>
    <name type="primary">ATL21C</name>
    <name type="ordered locus">At2g46493</name>
    <name type="ORF">F11C10</name>
    <name type="ORF">F13A10</name>
</gene>